<accession>P04239</accession>
<reference key="1">
    <citation type="journal article" date="1986" name="Biol. Chem. Hoppe-Seyler">
        <title>High-altitude respiration of birds. The primary structures of the alpha D-chains of the Bar-headed Goose (Anser indicus), the Greylag Goose(Anser anser) and the Canada Goose (Branta canadensis).</title>
        <authorList>
            <person name="Hiebl I."/>
            <person name="Schneeganss D."/>
            <person name="Braunitzer G."/>
        </authorList>
    </citation>
    <scope>PROTEIN SEQUENCE</scope>
</reference>
<name>HBAD_ANSIN</name>
<proteinExistence type="evidence at protein level"/>
<protein>
    <recommendedName>
        <fullName>Hemoglobin subunit alpha-D</fullName>
    </recommendedName>
    <alternativeName>
        <fullName>Alpha-D-globin</fullName>
    </alternativeName>
    <alternativeName>
        <fullName>Hemoglobin alpha-D chain</fullName>
    </alternativeName>
</protein>
<sequence>MLSADDKKIIAQLWEKVAGHQDEFGNEALQRMFVTYPQTKTYFPHFDVHPGSEQVRSHGKKVAAALGNAVKSLDNISQALSELSNLHAYNLRVDPANFKLLSQCFQVVLAVHLGKDYTPEMHAAFDKFLSAVAAVLAEKYR</sequence>
<organism>
    <name type="scientific">Anser indicus</name>
    <name type="common">Bar-headed goose</name>
    <name type="synonym">Anas indica</name>
    <dbReference type="NCBI Taxonomy" id="8846"/>
    <lineage>
        <taxon>Eukaryota</taxon>
        <taxon>Metazoa</taxon>
        <taxon>Chordata</taxon>
        <taxon>Craniata</taxon>
        <taxon>Vertebrata</taxon>
        <taxon>Euteleostomi</taxon>
        <taxon>Archelosauria</taxon>
        <taxon>Archosauria</taxon>
        <taxon>Dinosauria</taxon>
        <taxon>Saurischia</taxon>
        <taxon>Theropoda</taxon>
        <taxon>Coelurosauria</taxon>
        <taxon>Aves</taxon>
        <taxon>Neognathae</taxon>
        <taxon>Galloanserae</taxon>
        <taxon>Anseriformes</taxon>
        <taxon>Anatidae</taxon>
        <taxon>Anserinae</taxon>
        <taxon>Anser</taxon>
    </lineage>
</organism>
<feature type="chain" id="PRO_0000052818" description="Hemoglobin subunit alpha-D">
    <location>
        <begin position="1"/>
        <end position="141"/>
    </location>
</feature>
<feature type="domain" description="Globin" evidence="1">
    <location>
        <begin position="1"/>
        <end position="141"/>
    </location>
</feature>
<feature type="binding site" description="distal binding residue">
    <location>
        <position position="58"/>
    </location>
    <ligand>
        <name>heme b</name>
        <dbReference type="ChEBI" id="CHEBI:60344"/>
    </ligand>
    <ligandPart>
        <name>Fe</name>
        <dbReference type="ChEBI" id="CHEBI:18248"/>
    </ligandPart>
</feature>
<feature type="binding site" description="proximal binding residue">
    <location>
        <position position="87"/>
    </location>
    <ligand>
        <name>heme b</name>
        <dbReference type="ChEBI" id="CHEBI:60344"/>
    </ligand>
    <ligandPart>
        <name>Fe</name>
        <dbReference type="ChEBI" id="CHEBI:18248"/>
    </ligandPart>
</feature>
<evidence type="ECO:0000255" key="1">
    <source>
        <dbReference type="PROSITE-ProRule" id="PRU00238"/>
    </source>
</evidence>
<dbReference type="PIR" id="A02327">
    <property type="entry name" value="HAGSDI"/>
</dbReference>
<dbReference type="SMR" id="P04239"/>
<dbReference type="GO" id="GO:0072562">
    <property type="term" value="C:blood microparticle"/>
    <property type="evidence" value="ECO:0007669"/>
    <property type="project" value="TreeGrafter"/>
</dbReference>
<dbReference type="GO" id="GO:0031838">
    <property type="term" value="C:haptoglobin-hemoglobin complex"/>
    <property type="evidence" value="ECO:0007669"/>
    <property type="project" value="TreeGrafter"/>
</dbReference>
<dbReference type="GO" id="GO:0005833">
    <property type="term" value="C:hemoglobin complex"/>
    <property type="evidence" value="ECO:0007669"/>
    <property type="project" value="InterPro"/>
</dbReference>
<dbReference type="GO" id="GO:0031720">
    <property type="term" value="F:haptoglobin binding"/>
    <property type="evidence" value="ECO:0007669"/>
    <property type="project" value="TreeGrafter"/>
</dbReference>
<dbReference type="GO" id="GO:0020037">
    <property type="term" value="F:heme binding"/>
    <property type="evidence" value="ECO:0007669"/>
    <property type="project" value="InterPro"/>
</dbReference>
<dbReference type="GO" id="GO:0005506">
    <property type="term" value="F:iron ion binding"/>
    <property type="evidence" value="ECO:0007669"/>
    <property type="project" value="InterPro"/>
</dbReference>
<dbReference type="GO" id="GO:0043177">
    <property type="term" value="F:organic acid binding"/>
    <property type="evidence" value="ECO:0007669"/>
    <property type="project" value="TreeGrafter"/>
</dbReference>
<dbReference type="GO" id="GO:0019825">
    <property type="term" value="F:oxygen binding"/>
    <property type="evidence" value="ECO:0007669"/>
    <property type="project" value="InterPro"/>
</dbReference>
<dbReference type="GO" id="GO:0005344">
    <property type="term" value="F:oxygen carrier activity"/>
    <property type="evidence" value="ECO:0007669"/>
    <property type="project" value="UniProtKB-KW"/>
</dbReference>
<dbReference type="GO" id="GO:0004601">
    <property type="term" value="F:peroxidase activity"/>
    <property type="evidence" value="ECO:0007669"/>
    <property type="project" value="TreeGrafter"/>
</dbReference>
<dbReference type="GO" id="GO:0042744">
    <property type="term" value="P:hydrogen peroxide catabolic process"/>
    <property type="evidence" value="ECO:0007669"/>
    <property type="project" value="TreeGrafter"/>
</dbReference>
<dbReference type="CDD" id="cd08927">
    <property type="entry name" value="Hb-alpha-like"/>
    <property type="match status" value="1"/>
</dbReference>
<dbReference type="FunFam" id="1.10.490.10:FF:000002">
    <property type="entry name" value="Hemoglobin subunit alpha"/>
    <property type="match status" value="1"/>
</dbReference>
<dbReference type="Gene3D" id="1.10.490.10">
    <property type="entry name" value="Globins"/>
    <property type="match status" value="1"/>
</dbReference>
<dbReference type="InterPro" id="IPR000971">
    <property type="entry name" value="Globin"/>
</dbReference>
<dbReference type="InterPro" id="IPR009050">
    <property type="entry name" value="Globin-like_sf"/>
</dbReference>
<dbReference type="InterPro" id="IPR012292">
    <property type="entry name" value="Globin/Proto"/>
</dbReference>
<dbReference type="InterPro" id="IPR002338">
    <property type="entry name" value="Hemoglobin_a-typ"/>
</dbReference>
<dbReference type="InterPro" id="IPR050056">
    <property type="entry name" value="Hemoglobin_oxygen_transport"/>
</dbReference>
<dbReference type="InterPro" id="IPR002340">
    <property type="entry name" value="Hemoglobin_zeta"/>
</dbReference>
<dbReference type="PANTHER" id="PTHR11442">
    <property type="entry name" value="HEMOGLOBIN FAMILY MEMBER"/>
    <property type="match status" value="1"/>
</dbReference>
<dbReference type="PANTHER" id="PTHR11442:SF41">
    <property type="entry name" value="HEMOGLOBIN SUBUNIT ZETA"/>
    <property type="match status" value="1"/>
</dbReference>
<dbReference type="Pfam" id="PF00042">
    <property type="entry name" value="Globin"/>
    <property type="match status" value="1"/>
</dbReference>
<dbReference type="PRINTS" id="PR00612">
    <property type="entry name" value="ALPHAHAEM"/>
</dbReference>
<dbReference type="PRINTS" id="PR00816">
    <property type="entry name" value="ZETAHAEM"/>
</dbReference>
<dbReference type="SUPFAM" id="SSF46458">
    <property type="entry name" value="Globin-like"/>
    <property type="match status" value="1"/>
</dbReference>
<dbReference type="PROSITE" id="PS01033">
    <property type="entry name" value="GLOBIN"/>
    <property type="match status" value="1"/>
</dbReference>
<keyword id="KW-0903">Direct protein sequencing</keyword>
<keyword id="KW-0349">Heme</keyword>
<keyword id="KW-0408">Iron</keyword>
<keyword id="KW-0479">Metal-binding</keyword>
<keyword id="KW-0561">Oxygen transport</keyword>
<keyword id="KW-0813">Transport</keyword>
<gene>
    <name type="primary">HBAD</name>
</gene>
<comment type="function">
    <text>Involved in oxygen transport from the lung to the various peripheral tissues.</text>
</comment>
<comment type="subunit">
    <text>Heterotetramer of two alpha-D chains and two beta chains.</text>
</comment>
<comment type="tissue specificity">
    <text>Red blood cells.</text>
</comment>
<comment type="developmental stage">
    <text>In birds, the alpha-D chain occurs in a minor hemoglobin component, called hemoglobin d, which is expressed in late embryonic and adult life.</text>
</comment>
<comment type="similarity">
    <text evidence="1">Belongs to the globin family.</text>
</comment>